<sequence length="125" mass="14792">MAVYAKDLDNNKELNQKLINDQLKIIDTLLLAEKKNFLVYELPAPFDFSSGDPLASQRDIYYAIIKSLEERGFTVKICMKGDRALLFITWKKIQSIEINKKEEYLRMHFIQDEEKAFYCKFLESR</sequence>
<protein>
    <recommendedName>
        <fullName>Uncharacterized protein B125R</fullName>
        <shortName>pB125R</shortName>
    </recommendedName>
</protein>
<dbReference type="EMBL" id="U18466">
    <property type="protein sequence ID" value="AAA65312.1"/>
    <property type="molecule type" value="Genomic_DNA"/>
</dbReference>
<dbReference type="RefSeq" id="NP_042776.1">
    <property type="nucleotide sequence ID" value="NC_001659.2"/>
</dbReference>
<dbReference type="GeneID" id="22220312"/>
<dbReference type="KEGG" id="vg:22220312"/>
<dbReference type="Proteomes" id="UP000000624">
    <property type="component" value="Segment"/>
</dbReference>
<organismHost>
    <name type="scientific">Ornithodoros</name>
    <name type="common">relapsing fever ticks</name>
    <dbReference type="NCBI Taxonomy" id="6937"/>
</organismHost>
<organismHost>
    <name type="scientific">Sus scrofa</name>
    <name type="common">Pig</name>
    <dbReference type="NCBI Taxonomy" id="9823"/>
</organismHost>
<feature type="chain" id="PRO_0000373500" description="Uncharacterized protein B125R">
    <location>
        <begin position="1"/>
        <end position="125"/>
    </location>
</feature>
<keyword id="KW-0426">Late protein</keyword>
<keyword id="KW-1185">Reference proteome</keyword>
<organism>
    <name type="scientific">African swine fever virus (strain Badajoz 1971 Vero-adapted)</name>
    <name type="common">Ba71V</name>
    <name type="synonym">ASFV</name>
    <dbReference type="NCBI Taxonomy" id="10498"/>
    <lineage>
        <taxon>Viruses</taxon>
        <taxon>Varidnaviria</taxon>
        <taxon>Bamfordvirae</taxon>
        <taxon>Nucleocytoviricota</taxon>
        <taxon>Pokkesviricetes</taxon>
        <taxon>Asfuvirales</taxon>
        <taxon>Asfarviridae</taxon>
        <taxon>Asfivirus</taxon>
        <taxon>African swine fever virus</taxon>
    </lineage>
</organism>
<comment type="induction">
    <text evidence="1">Expressed in the late phase of the viral replicative cycle.</text>
</comment>
<comment type="similarity">
    <text evidence="2">Belongs to the asfivirus B125R family.</text>
</comment>
<reference key="1">
    <citation type="journal article" date="1995" name="Virology">
        <title>Analysis of the complete nucleotide sequence of African swine fever virus.</title>
        <authorList>
            <person name="Yanez R.J."/>
            <person name="Rodriguez J.M."/>
            <person name="Nogal M.L."/>
            <person name="Yuste L."/>
            <person name="Enriquez C."/>
            <person name="Rodriguez J.F."/>
            <person name="Vinuela E."/>
        </authorList>
    </citation>
    <scope>NUCLEOTIDE SEQUENCE [LARGE SCALE GENOMIC DNA]</scope>
</reference>
<reference key="2">
    <citation type="journal article" date="2020" name="J. Virol.">
        <title>The African Swine Fever Virus Transcriptome.</title>
        <authorList>
            <person name="Cackett G."/>
            <person name="Matelska D."/>
            <person name="Sykora M."/>
            <person name="Portugal R."/>
            <person name="Malecki M."/>
            <person name="Baehler J."/>
            <person name="Dixon L."/>
            <person name="Werner F."/>
        </authorList>
    </citation>
    <scope>INDUCTION</scope>
</reference>
<accession>Q65171</accession>
<gene>
    <name type="ordered locus">Ba71V-082</name>
    <name type="ORF">B125R</name>
</gene>
<proteinExistence type="evidence at transcript level"/>
<name>VF125_ASFB7</name>
<evidence type="ECO:0000269" key="1">
    <source>
    </source>
</evidence>
<evidence type="ECO:0000305" key="2"/>